<organism>
    <name type="scientific">Wolinella succinogenes (strain ATCC 29543 / DSM 1740 / CCUG 13145 / JCM 31913 / LMG 7466 / NCTC 11488 / FDC 602W)</name>
    <name type="common">Vibrio succinogenes</name>
    <dbReference type="NCBI Taxonomy" id="273121"/>
    <lineage>
        <taxon>Bacteria</taxon>
        <taxon>Pseudomonadati</taxon>
        <taxon>Campylobacterota</taxon>
        <taxon>Epsilonproteobacteria</taxon>
        <taxon>Campylobacterales</taxon>
        <taxon>Helicobacteraceae</taxon>
        <taxon>Wolinella</taxon>
    </lineage>
</organism>
<comment type="similarity">
    <text evidence="1">Belongs to the peptidase A31 family.</text>
</comment>
<comment type="sequence caution" evidence="1">
    <conflict type="erroneous initiation">
        <sequence resource="EMBL-CDS" id="CAE10711"/>
    </conflict>
</comment>
<proteinExistence type="inferred from homology"/>
<gene>
    <name type="primary">hydD</name>
    <name type="synonym">hyaD</name>
    <name type="ordered locus">WS1684</name>
</gene>
<sequence length="159" mass="17491">MHLSNLLKVNYRFEGPHQVDVIDGGTLAQLLIPLITSYDYVIVIDCVDAGGGKIGEVYFFDFDNVPNVITWQGSAHEVEMLQTLRMTEVNGDLPPVKIVGVIPSIIGSETAFDLSKEVAEASVTMEKIVLNHLQELGVEITRIDSKTIDEIAPLSYKGF</sequence>
<reference key="1">
    <citation type="journal article" date="1992" name="Eur. J. Biochem.">
        <title>The quinone-reactive Ni/Fe-hydrogenase of Wolinella succinogenes.</title>
        <authorList>
            <person name="Dross F."/>
            <person name="Geisler V."/>
            <person name="Lenger R."/>
            <person name="Theis F."/>
            <person name="Krafft T."/>
            <person name="Fahrenholz F."/>
            <person name="Kojro E."/>
            <person name="Duchene A."/>
            <person name="Tripier D."/>
            <person name="Juvenal K."/>
            <person name="Kroeger A."/>
        </authorList>
    </citation>
    <scope>NUCLEOTIDE SEQUENCE [GENOMIC DNA]</scope>
</reference>
<reference key="2">
    <citation type="journal article" date="1998" name="Arch. Microbiol.">
        <title>Two membrane anchors of Wolinella succinogenes hydrogenase and their function in fumarate and polysulfide respiration.</title>
        <authorList>
            <person name="Gross R."/>
            <person name="Simon J."/>
            <person name="Theis F."/>
            <person name="Kroeger A."/>
        </authorList>
    </citation>
    <scope>NUCLEOTIDE SEQUENCE [GENOMIC DNA]</scope>
    <source>
        <strain>ATCC 29543 / DSM 1740 / CCUG 13145 / JCM 31913 / LMG 7466 / NCTC 11488 / FDC 602W</strain>
    </source>
</reference>
<reference key="3">
    <citation type="journal article" date="2003" name="Proc. Natl. Acad. Sci. U.S.A.">
        <title>Complete genome sequence and analysis of Wolinella succinogenes.</title>
        <authorList>
            <person name="Baar C."/>
            <person name="Eppinger M."/>
            <person name="Raddatz G."/>
            <person name="Simon J."/>
            <person name="Lanz C."/>
            <person name="Klimmek O."/>
            <person name="Nandakumar R."/>
            <person name="Gross R."/>
            <person name="Rosinus A."/>
            <person name="Keller H."/>
            <person name="Jagtap P."/>
            <person name="Linke B."/>
            <person name="Meyer F."/>
            <person name="Lederer H."/>
            <person name="Schuster S.C."/>
        </authorList>
    </citation>
    <scope>NUCLEOTIDE SEQUENCE [LARGE SCALE GENOMIC DNA]</scope>
    <source>
        <strain>ATCC 29543 / DSM 1740 / CCUG 13145 / JCM 31913 / LMG 7466 / NCTC 11488 / FDC 602W</strain>
    </source>
</reference>
<name>HYDD_WOLSU</name>
<feature type="chain" id="PRO_0000084105" description="Protein HydD">
    <location>
        <begin position="1"/>
        <end position="159"/>
    </location>
</feature>
<dbReference type="EMBL" id="X65189">
    <property type="protein sequence ID" value="CAA46305.1"/>
    <property type="molecule type" value="Genomic_DNA"/>
</dbReference>
<dbReference type="EMBL" id="AJ003049">
    <property type="protein sequence ID" value="CAA05820.1"/>
    <property type="molecule type" value="Genomic_DNA"/>
</dbReference>
<dbReference type="EMBL" id="BX571661">
    <property type="protein sequence ID" value="CAE10711.1"/>
    <property type="status" value="ALT_INIT"/>
    <property type="molecule type" value="Genomic_DNA"/>
</dbReference>
<dbReference type="PIR" id="S22407">
    <property type="entry name" value="S22407"/>
</dbReference>
<dbReference type="RefSeq" id="WP_011139495.1">
    <property type="nucleotide sequence ID" value="NC_005090.1"/>
</dbReference>
<dbReference type="SMR" id="P31876"/>
<dbReference type="STRING" id="273121.WS1684"/>
<dbReference type="DNASU" id="2554777"/>
<dbReference type="KEGG" id="wsu:WS1684"/>
<dbReference type="eggNOG" id="COG0680">
    <property type="taxonomic scope" value="Bacteria"/>
</dbReference>
<dbReference type="HOGENOM" id="CLU_099037_0_1_7"/>
<dbReference type="Proteomes" id="UP000000422">
    <property type="component" value="Chromosome"/>
</dbReference>
<dbReference type="GO" id="GO:0004190">
    <property type="term" value="F:aspartic-type endopeptidase activity"/>
    <property type="evidence" value="ECO:0007669"/>
    <property type="project" value="UniProtKB-KW"/>
</dbReference>
<dbReference type="GO" id="GO:0008047">
    <property type="term" value="F:enzyme activator activity"/>
    <property type="evidence" value="ECO:0007669"/>
    <property type="project" value="InterPro"/>
</dbReference>
<dbReference type="GO" id="GO:0016485">
    <property type="term" value="P:protein processing"/>
    <property type="evidence" value="ECO:0007669"/>
    <property type="project" value="TreeGrafter"/>
</dbReference>
<dbReference type="CDD" id="cd06062">
    <property type="entry name" value="H2MP_MemB-H2up"/>
    <property type="match status" value="1"/>
</dbReference>
<dbReference type="Gene3D" id="3.40.50.1450">
    <property type="entry name" value="HybD-like"/>
    <property type="match status" value="1"/>
</dbReference>
<dbReference type="InterPro" id="IPR023430">
    <property type="entry name" value="Pept_HybD-like_dom_sf"/>
</dbReference>
<dbReference type="InterPro" id="IPR000671">
    <property type="entry name" value="Peptidase_A31"/>
</dbReference>
<dbReference type="NCBIfam" id="TIGR00072">
    <property type="entry name" value="hydrog_prot"/>
    <property type="match status" value="1"/>
</dbReference>
<dbReference type="PANTHER" id="PTHR30302">
    <property type="entry name" value="HYDROGENASE 1 MATURATION PROTEASE"/>
    <property type="match status" value="1"/>
</dbReference>
<dbReference type="PANTHER" id="PTHR30302:SF1">
    <property type="entry name" value="HYDROGENASE 2 MATURATION PROTEASE"/>
    <property type="match status" value="1"/>
</dbReference>
<dbReference type="Pfam" id="PF01750">
    <property type="entry name" value="HycI"/>
    <property type="match status" value="1"/>
</dbReference>
<dbReference type="PRINTS" id="PR00446">
    <property type="entry name" value="HYDRGNUPTAKE"/>
</dbReference>
<dbReference type="SUPFAM" id="SSF53163">
    <property type="entry name" value="HybD-like"/>
    <property type="match status" value="1"/>
</dbReference>
<accession>P31876</accession>
<protein>
    <recommendedName>
        <fullName>Protein HydD</fullName>
    </recommendedName>
</protein>
<keyword id="KW-0064">Aspartyl protease</keyword>
<keyword id="KW-0378">Hydrolase</keyword>
<keyword id="KW-0645">Protease</keyword>
<keyword id="KW-1185">Reference proteome</keyword>
<evidence type="ECO:0000305" key="1"/>